<feature type="initiator methionine" description="Removed" evidence="8">
    <location>
        <position position="1"/>
    </location>
</feature>
<feature type="chain" id="PRO_0000193564" description="MOB kinase activator 1B">
    <location>
        <begin position="2"/>
        <end position="216"/>
    </location>
</feature>
<feature type="binding site" evidence="1">
    <location>
        <position position="79"/>
    </location>
    <ligand>
        <name>Zn(2+)</name>
        <dbReference type="ChEBI" id="CHEBI:29105"/>
    </ligand>
</feature>
<feature type="binding site" evidence="1">
    <location>
        <position position="84"/>
    </location>
    <ligand>
        <name>Zn(2+)</name>
        <dbReference type="ChEBI" id="CHEBI:29105"/>
    </ligand>
</feature>
<feature type="binding site" evidence="1">
    <location>
        <position position="161"/>
    </location>
    <ligand>
        <name>Zn(2+)</name>
        <dbReference type="ChEBI" id="CHEBI:29105"/>
    </ligand>
</feature>
<feature type="binding site" evidence="1">
    <location>
        <position position="166"/>
    </location>
    <ligand>
        <name>Zn(2+)</name>
        <dbReference type="ChEBI" id="CHEBI:29105"/>
    </ligand>
</feature>
<feature type="modified residue" description="N-acetylserine" evidence="8">
    <location>
        <position position="2"/>
    </location>
</feature>
<feature type="modified residue" description="Phosphothreonine; by STK4/MST1" evidence="3">
    <location>
        <position position="12"/>
    </location>
</feature>
<feature type="modified residue" description="Phosphothreonine; by STK4/MST1" evidence="3">
    <location>
        <position position="35"/>
    </location>
</feature>
<feature type="splice variant" id="VSP_045097" description="In isoform 2." evidence="5">
    <original>MSFLF</original>
    <variation>MEGATDVNES</variation>
    <location>
        <begin position="1"/>
        <end position="5"/>
    </location>
</feature>
<evidence type="ECO:0000250" key="1"/>
<evidence type="ECO:0000269" key="2">
    <source>
    </source>
</evidence>
<evidence type="ECO:0000269" key="3">
    <source>
    </source>
</evidence>
<evidence type="ECO:0000269" key="4">
    <source>
    </source>
</evidence>
<evidence type="ECO:0000303" key="5">
    <source>
    </source>
</evidence>
<evidence type="ECO:0000305" key="6"/>
<evidence type="ECO:0000312" key="7">
    <source>
        <dbReference type="HGNC" id="HGNC:29801"/>
    </source>
</evidence>
<evidence type="ECO:0007744" key="8">
    <source>
    </source>
</evidence>
<dbReference type="EMBL" id="AJ577473">
    <property type="protein sequence ID" value="CAE12091.1"/>
    <property type="molecule type" value="mRNA"/>
</dbReference>
<dbReference type="EMBL" id="AK299481">
    <property type="protein sequence ID" value="BAG61445.1"/>
    <property type="molecule type" value="mRNA"/>
</dbReference>
<dbReference type="EMBL" id="AK313513">
    <property type="protein sequence ID" value="BAG36293.1"/>
    <property type="molecule type" value="mRNA"/>
</dbReference>
<dbReference type="EMBL" id="AC021989">
    <property type="status" value="NOT_ANNOTATED_CDS"/>
    <property type="molecule type" value="Genomic_DNA"/>
</dbReference>
<dbReference type="EMBL" id="AC093851">
    <property type="status" value="NOT_ANNOTATED_CDS"/>
    <property type="molecule type" value="Genomic_DNA"/>
</dbReference>
<dbReference type="EMBL" id="AC108014">
    <property type="status" value="NOT_ANNOTATED_CDS"/>
    <property type="molecule type" value="Genomic_DNA"/>
</dbReference>
<dbReference type="EMBL" id="CH471057">
    <property type="protein sequence ID" value="EAX05636.1"/>
    <property type="molecule type" value="Genomic_DNA"/>
</dbReference>
<dbReference type="EMBL" id="BC038112">
    <property type="protein sequence ID" value="AAH38112.1"/>
    <property type="molecule type" value="mRNA"/>
</dbReference>
<dbReference type="CCDS" id="CCDS34002.1">
    <molecule id="Q7L9L4-1"/>
</dbReference>
<dbReference type="CCDS" id="CCDS58903.1">
    <molecule id="Q7L9L4-2"/>
</dbReference>
<dbReference type="RefSeq" id="NP_001231695.1">
    <molecule id="Q7L9L4-2"/>
    <property type="nucleotide sequence ID" value="NM_001244766.2"/>
</dbReference>
<dbReference type="RefSeq" id="NP_775739.1">
    <molecule id="Q7L9L4-1"/>
    <property type="nucleotide sequence ID" value="NM_173468.4"/>
</dbReference>
<dbReference type="RefSeq" id="XP_005265766.1">
    <molecule id="Q7L9L4-2"/>
    <property type="nucleotide sequence ID" value="XM_005265709.3"/>
</dbReference>
<dbReference type="RefSeq" id="XP_054207224.1">
    <molecule id="Q7L9L4-2"/>
    <property type="nucleotide sequence ID" value="XM_054351249.1"/>
</dbReference>
<dbReference type="SMR" id="Q7L9L4"/>
<dbReference type="BioGRID" id="124960">
    <property type="interactions" value="66"/>
</dbReference>
<dbReference type="FunCoup" id="Q7L9L4">
    <property type="interactions" value="3520"/>
</dbReference>
<dbReference type="IntAct" id="Q7L9L4">
    <property type="interactions" value="48"/>
</dbReference>
<dbReference type="MINT" id="Q7L9L4"/>
<dbReference type="STRING" id="9606.ENSP00000379366"/>
<dbReference type="ChEMBL" id="CHEMBL4295878"/>
<dbReference type="GlyGen" id="Q7L9L4">
    <property type="glycosylation" value="1 site, 1 O-linked glycan (1 site)"/>
</dbReference>
<dbReference type="iPTMnet" id="Q7L9L4"/>
<dbReference type="PhosphoSitePlus" id="Q7L9L4"/>
<dbReference type="BioMuta" id="MOB1B"/>
<dbReference type="DMDM" id="56749324"/>
<dbReference type="jPOST" id="Q7L9L4"/>
<dbReference type="MassIVE" id="Q7L9L4"/>
<dbReference type="PaxDb" id="9606-ENSP00000379366"/>
<dbReference type="PeptideAtlas" id="Q7L9L4"/>
<dbReference type="ProteomicsDB" id="4978"/>
<dbReference type="ProteomicsDB" id="68845">
    <molecule id="Q7L9L4-1"/>
</dbReference>
<dbReference type="Pumba" id="Q7L9L4"/>
<dbReference type="Antibodypedia" id="24395">
    <property type="antibodies" value="389 antibodies from 29 providers"/>
</dbReference>
<dbReference type="DNASU" id="92597"/>
<dbReference type="Ensembl" id="ENST00000309395.7">
    <molecule id="Q7L9L4-1"/>
    <property type="protein sequence ID" value="ENSP00000310189.3"/>
    <property type="gene ID" value="ENSG00000173542.9"/>
</dbReference>
<dbReference type="Ensembl" id="ENST00000396051.2">
    <molecule id="Q7L9L4-2"/>
    <property type="protein sequence ID" value="ENSP00000379366.2"/>
    <property type="gene ID" value="ENSG00000173542.9"/>
</dbReference>
<dbReference type="GeneID" id="92597"/>
<dbReference type="KEGG" id="hsa:92597"/>
<dbReference type="MANE-Select" id="ENST00000309395.7">
    <property type="protein sequence ID" value="ENSP00000310189.3"/>
    <property type="RefSeq nucleotide sequence ID" value="NM_173468.4"/>
    <property type="RefSeq protein sequence ID" value="NP_775739.1"/>
</dbReference>
<dbReference type="UCSC" id="uc003hfw.4">
    <molecule id="Q7L9L4-1"/>
    <property type="organism name" value="human"/>
</dbReference>
<dbReference type="AGR" id="HGNC:29801"/>
<dbReference type="CTD" id="92597"/>
<dbReference type="DisGeNET" id="92597"/>
<dbReference type="GeneCards" id="MOB1B"/>
<dbReference type="HGNC" id="HGNC:29801">
    <property type="gene designation" value="MOB1B"/>
</dbReference>
<dbReference type="HPA" id="ENSG00000173542">
    <property type="expression patterns" value="Low tissue specificity"/>
</dbReference>
<dbReference type="MIM" id="609282">
    <property type="type" value="gene"/>
</dbReference>
<dbReference type="neXtProt" id="NX_Q7L9L4"/>
<dbReference type="OpenTargets" id="ENSG00000173542"/>
<dbReference type="PharmGKB" id="PA134871841"/>
<dbReference type="VEuPathDB" id="HostDB:ENSG00000173542"/>
<dbReference type="eggNOG" id="KOG0440">
    <property type="taxonomic scope" value="Eukaryota"/>
</dbReference>
<dbReference type="GeneTree" id="ENSGT01120000271863"/>
<dbReference type="HOGENOM" id="CLU_038321_3_2_1"/>
<dbReference type="InParanoid" id="Q7L9L4"/>
<dbReference type="OMA" id="VDNEQMF"/>
<dbReference type="OrthoDB" id="8170117at2759"/>
<dbReference type="PAN-GO" id="Q7L9L4">
    <property type="GO annotations" value="5 GO annotations based on evolutionary models"/>
</dbReference>
<dbReference type="PhylomeDB" id="Q7L9L4"/>
<dbReference type="TreeFam" id="TF300789"/>
<dbReference type="PathwayCommons" id="Q7L9L4"/>
<dbReference type="Reactome" id="R-HSA-2028269">
    <property type="pathway name" value="Signaling by Hippo"/>
</dbReference>
<dbReference type="SignaLink" id="Q7L9L4"/>
<dbReference type="SIGNOR" id="Q7L9L4"/>
<dbReference type="BioGRID-ORCS" id="92597">
    <property type="hits" value="13 hits in 1158 CRISPR screens"/>
</dbReference>
<dbReference type="CD-CODE" id="8C2F96ED">
    <property type="entry name" value="Centrosome"/>
</dbReference>
<dbReference type="ChiTaRS" id="MOB1B">
    <property type="organism name" value="human"/>
</dbReference>
<dbReference type="GeneWiki" id="MOBKL1A"/>
<dbReference type="GenomeRNAi" id="92597"/>
<dbReference type="Pharos" id="Q7L9L4">
    <property type="development level" value="Tbio"/>
</dbReference>
<dbReference type="PRO" id="PR:Q7L9L4"/>
<dbReference type="Proteomes" id="UP000005640">
    <property type="component" value="Chromosome 4"/>
</dbReference>
<dbReference type="RNAct" id="Q7L9L4">
    <property type="molecule type" value="protein"/>
</dbReference>
<dbReference type="Bgee" id="ENSG00000173542">
    <property type="expression patterns" value="Expressed in renal medulla and 194 other cell types or tissues"/>
</dbReference>
<dbReference type="ExpressionAtlas" id="Q7L9L4">
    <property type="expression patterns" value="baseline and differential"/>
</dbReference>
<dbReference type="GO" id="GO:0005737">
    <property type="term" value="C:cytoplasm"/>
    <property type="evidence" value="ECO:0000314"/>
    <property type="project" value="UniProtKB"/>
</dbReference>
<dbReference type="GO" id="GO:0005829">
    <property type="term" value="C:cytosol"/>
    <property type="evidence" value="ECO:0000304"/>
    <property type="project" value="Reactome"/>
</dbReference>
<dbReference type="GO" id="GO:0070062">
    <property type="term" value="C:extracellular exosome"/>
    <property type="evidence" value="ECO:0007005"/>
    <property type="project" value="UniProtKB"/>
</dbReference>
<dbReference type="GO" id="GO:0005634">
    <property type="term" value="C:nucleus"/>
    <property type="evidence" value="ECO:0000314"/>
    <property type="project" value="UniProtKB"/>
</dbReference>
<dbReference type="GO" id="GO:0019209">
    <property type="term" value="F:kinase activator activity"/>
    <property type="evidence" value="ECO:0000314"/>
    <property type="project" value="UniProtKB"/>
</dbReference>
<dbReference type="GO" id="GO:0019900">
    <property type="term" value="F:kinase binding"/>
    <property type="evidence" value="ECO:0000353"/>
    <property type="project" value="UniProtKB"/>
</dbReference>
<dbReference type="GO" id="GO:0046872">
    <property type="term" value="F:metal ion binding"/>
    <property type="evidence" value="ECO:0007669"/>
    <property type="project" value="UniProtKB-KW"/>
</dbReference>
<dbReference type="GO" id="GO:0030295">
    <property type="term" value="F:protein kinase activator activity"/>
    <property type="evidence" value="ECO:0000318"/>
    <property type="project" value="GO_Central"/>
</dbReference>
<dbReference type="GO" id="GO:0043539">
    <property type="term" value="F:protein serine/threonine kinase activator activity"/>
    <property type="evidence" value="ECO:0000314"/>
    <property type="project" value="UniProt"/>
</dbReference>
<dbReference type="GO" id="GO:0035329">
    <property type="term" value="P:hippo signaling"/>
    <property type="evidence" value="ECO:0000314"/>
    <property type="project" value="UniProtKB"/>
</dbReference>
<dbReference type="GO" id="GO:0031952">
    <property type="term" value="P:regulation of protein autophosphorylation"/>
    <property type="evidence" value="ECO:0000314"/>
    <property type="project" value="UniProtKB"/>
</dbReference>
<dbReference type="FunFam" id="1.20.140.30:FF:000001">
    <property type="entry name" value="MOB kinase activator 1A"/>
    <property type="match status" value="1"/>
</dbReference>
<dbReference type="Gene3D" id="1.20.140.30">
    <property type="entry name" value="MOB kinase activator"/>
    <property type="match status" value="1"/>
</dbReference>
<dbReference type="InterPro" id="IPR005301">
    <property type="entry name" value="MOB_kinase_act_fam"/>
</dbReference>
<dbReference type="InterPro" id="IPR036703">
    <property type="entry name" value="MOB_kinase_act_sf"/>
</dbReference>
<dbReference type="PANTHER" id="PTHR22599">
    <property type="entry name" value="MPS ONE BINDER KINASE ACTIVATOR-LIKE MOB"/>
    <property type="match status" value="1"/>
</dbReference>
<dbReference type="Pfam" id="PF03637">
    <property type="entry name" value="Mob1_phocein"/>
    <property type="match status" value="1"/>
</dbReference>
<dbReference type="SMART" id="SM01388">
    <property type="entry name" value="Mob1_phocein"/>
    <property type="match status" value="1"/>
</dbReference>
<dbReference type="SUPFAM" id="SSF101152">
    <property type="entry name" value="Mob1/phocein"/>
    <property type="match status" value="1"/>
</dbReference>
<comment type="function">
    <text evidence="2 4">Activator of LATS1/2 in the Hippo signaling pathway which plays a pivotal role in organ size control and tumor suppression by restricting proliferation and promoting apoptosis. The core of this pathway is composed of a kinase cascade wherein STK3/MST2 and STK4/MST1, in complex with its regulatory protein SAV1, phosphorylates and activates LATS1/2 in complex with its regulatory protein MOB1, which in turn phosphorylates and inactivates YAP1 oncoprotein and WWTR1/TAZ. Phosphorylation of YAP1 by LATS1/2 inhibits its translocation into the nucleus to regulate cellular genes important for cell proliferation, cell death, and cell migration. Stimulates the kinase activity of STK38L.</text>
</comment>
<comment type="subunit">
    <text evidence="2 4">Binds STK38L. Interacts with LATS1 and LATS2.</text>
</comment>
<comment type="interaction">
    <interactant intactId="EBI-2558745">
        <id>Q7L9L4</id>
    </interactant>
    <interactant intactId="EBI-444209">
        <id>O95835</id>
        <label>LATS1</label>
    </interactant>
    <organismsDiffer>false</organismsDiffer>
    <experiments>9</experiments>
</comment>
<comment type="interaction">
    <interactant intactId="EBI-2558745">
        <id>Q7L9L4</id>
    </interactant>
    <interactant intactId="EBI-3506895">
        <id>Q9NRM7</id>
        <label>LATS2</label>
    </interactant>
    <organismsDiffer>false</organismsDiffer>
    <experiments>7</experiments>
</comment>
<comment type="interaction">
    <interactant intactId="EBI-2558745">
        <id>Q7L9L4</id>
    </interactant>
    <interactant intactId="EBI-742084">
        <id>P49902</id>
        <label>NT5C2</label>
    </interactant>
    <organismsDiffer>false</organismsDiffer>
    <experiments>3</experiments>
</comment>
<comment type="interaction">
    <interactant intactId="EBI-2558745">
        <id>Q7L9L4</id>
    </interactant>
    <interactant intactId="EBI-992580">
        <id>Q13188</id>
        <label>STK3</label>
    </interactant>
    <organismsDiffer>false</organismsDiffer>
    <experiments>9</experiments>
</comment>
<comment type="interaction">
    <interactant intactId="EBI-2558745">
        <id>Q7L9L4</id>
    </interactant>
    <interactant intactId="EBI-367376">
        <id>Q13043</id>
        <label>STK4</label>
    </interactant>
    <organismsDiffer>false</organismsDiffer>
    <experiments>4</experiments>
</comment>
<comment type="interaction">
    <interactant intactId="EBI-2558745">
        <id>Q7L9L4</id>
    </interactant>
    <interactant intactId="EBI-357849">
        <id>Q15025</id>
        <label>TNIP1</label>
    </interactant>
    <organismsDiffer>false</organismsDiffer>
    <experiments>3</experiments>
</comment>
<comment type="interaction">
    <interactant intactId="EBI-2558745">
        <id>Q7L9L4</id>
    </interactant>
    <interactant intactId="EBI-712969">
        <id>Q9Y3C0</id>
        <label>WASHC3</label>
    </interactant>
    <organismsDiffer>false</organismsDiffer>
    <experiments>3</experiments>
</comment>
<comment type="subcellular location">
    <subcellularLocation>
        <location evidence="2">Cytoplasm</location>
    </subcellularLocation>
    <subcellularLocation>
        <location evidence="2">Nucleus</location>
    </subcellularLocation>
</comment>
<comment type="alternative products">
    <event type="alternative splicing"/>
    <isoform>
        <id>Q7L9L4-1</id>
        <name>1</name>
        <sequence type="displayed"/>
    </isoform>
    <isoform>
        <id>Q7L9L4-2</id>
        <name>2</name>
        <sequence type="described" ref="VSP_045097"/>
    </isoform>
</comment>
<comment type="tissue specificity">
    <text evidence="4">Adrenal gland, bone marrow, brain, lung, placenta, prostate, salivary gland, skeletal muscle, testis, thymus, thyroid gland, uterus, colon with mucosa, fetal brain and fetal liver.</text>
</comment>
<comment type="PTM">
    <text evidence="3">Phosphorylated by STK3/MST2 and STK4/MST1 and this phosphorylation enhances its binding to LATS1.</text>
</comment>
<comment type="similarity">
    <text evidence="6">Belongs to the MOB1/phocein family.</text>
</comment>
<proteinExistence type="evidence at protein level"/>
<protein>
    <recommendedName>
        <fullName>MOB kinase activator 1B</fullName>
    </recommendedName>
    <alternativeName>
        <fullName>Mob1 homolog 1A</fullName>
        <shortName>Mob1A</shortName>
    </alternativeName>
    <alternativeName>
        <fullName>Mob1B</fullName>
    </alternativeName>
    <alternativeName>
        <fullName>Mps one binder kinase activator-like 1A</fullName>
    </alternativeName>
</protein>
<keyword id="KW-0007">Acetylation</keyword>
<keyword id="KW-0025">Alternative splicing</keyword>
<keyword id="KW-0963">Cytoplasm</keyword>
<keyword id="KW-0479">Metal-binding</keyword>
<keyword id="KW-0539">Nucleus</keyword>
<keyword id="KW-0597">Phosphoprotein</keyword>
<keyword id="KW-1267">Proteomics identification</keyword>
<keyword id="KW-1185">Reference proteome</keyword>
<keyword id="KW-0862">Zinc</keyword>
<name>MOB1B_HUMAN</name>
<organism>
    <name type="scientific">Homo sapiens</name>
    <name type="common">Human</name>
    <dbReference type="NCBI Taxonomy" id="9606"/>
    <lineage>
        <taxon>Eukaryota</taxon>
        <taxon>Metazoa</taxon>
        <taxon>Chordata</taxon>
        <taxon>Craniata</taxon>
        <taxon>Vertebrata</taxon>
        <taxon>Euteleostomi</taxon>
        <taxon>Mammalia</taxon>
        <taxon>Eutheria</taxon>
        <taxon>Euarchontoglires</taxon>
        <taxon>Primates</taxon>
        <taxon>Haplorrhini</taxon>
        <taxon>Catarrhini</taxon>
        <taxon>Hominidae</taxon>
        <taxon>Homo</taxon>
    </lineage>
</organism>
<sequence>MSFLFGSRSSKTFKPKKNIPEGSHQYELLKHAEATLGSGNLRMAVMLPEGEDLNEWVAVNTVDFFNQINMLYGTITDFCTEESCPVMSAGPKYEYHWADGTNIKKPIKCSAPKYIDYLMTWVQDQLDDETLFPSKIGVPFPKNFMSVAKTILKRLFRVYAHIYHQHFDPVIQLQEEAHLNTSFKHFIFFVQEFNLIDRRELAPLQELIEKLTSKDR</sequence>
<accession>Q7L9L4</accession>
<accession>B2R8U6</accession>
<accession>B4DRY3</accession>
<accession>Q8IY23</accession>
<gene>
    <name evidence="7" type="primary">MOB1B</name>
    <name type="synonym">MOB4A</name>
    <name type="synonym">MOBKL1A</name>
</gene>
<reference key="1">
    <citation type="submission" date="2003-07" db="EMBL/GenBank/DDBJ databases">
        <title>Characterization of the human Mob-1 like proteins.</title>
        <authorList>
            <person name="Florindo C.S."/>
            <person name="Tavares A.A."/>
        </authorList>
    </citation>
    <scope>NUCLEOTIDE SEQUENCE [MRNA] (ISOFORM 1)</scope>
</reference>
<reference key="2">
    <citation type="journal article" date="2004" name="Nat. Genet.">
        <title>Complete sequencing and characterization of 21,243 full-length human cDNAs.</title>
        <authorList>
            <person name="Ota T."/>
            <person name="Suzuki Y."/>
            <person name="Nishikawa T."/>
            <person name="Otsuki T."/>
            <person name="Sugiyama T."/>
            <person name="Irie R."/>
            <person name="Wakamatsu A."/>
            <person name="Hayashi K."/>
            <person name="Sato H."/>
            <person name="Nagai K."/>
            <person name="Kimura K."/>
            <person name="Makita H."/>
            <person name="Sekine M."/>
            <person name="Obayashi M."/>
            <person name="Nishi T."/>
            <person name="Shibahara T."/>
            <person name="Tanaka T."/>
            <person name="Ishii S."/>
            <person name="Yamamoto J."/>
            <person name="Saito K."/>
            <person name="Kawai Y."/>
            <person name="Isono Y."/>
            <person name="Nakamura Y."/>
            <person name="Nagahari K."/>
            <person name="Murakami K."/>
            <person name="Yasuda T."/>
            <person name="Iwayanagi T."/>
            <person name="Wagatsuma M."/>
            <person name="Shiratori A."/>
            <person name="Sudo H."/>
            <person name="Hosoiri T."/>
            <person name="Kaku Y."/>
            <person name="Kodaira H."/>
            <person name="Kondo H."/>
            <person name="Sugawara M."/>
            <person name="Takahashi M."/>
            <person name="Kanda K."/>
            <person name="Yokoi T."/>
            <person name="Furuya T."/>
            <person name="Kikkawa E."/>
            <person name="Omura Y."/>
            <person name="Abe K."/>
            <person name="Kamihara K."/>
            <person name="Katsuta N."/>
            <person name="Sato K."/>
            <person name="Tanikawa M."/>
            <person name="Yamazaki M."/>
            <person name="Ninomiya K."/>
            <person name="Ishibashi T."/>
            <person name="Yamashita H."/>
            <person name="Murakawa K."/>
            <person name="Fujimori K."/>
            <person name="Tanai H."/>
            <person name="Kimata M."/>
            <person name="Watanabe M."/>
            <person name="Hiraoka S."/>
            <person name="Chiba Y."/>
            <person name="Ishida S."/>
            <person name="Ono Y."/>
            <person name="Takiguchi S."/>
            <person name="Watanabe S."/>
            <person name="Yosida M."/>
            <person name="Hotuta T."/>
            <person name="Kusano J."/>
            <person name="Kanehori K."/>
            <person name="Takahashi-Fujii A."/>
            <person name="Hara H."/>
            <person name="Tanase T.-O."/>
            <person name="Nomura Y."/>
            <person name="Togiya S."/>
            <person name="Komai F."/>
            <person name="Hara R."/>
            <person name="Takeuchi K."/>
            <person name="Arita M."/>
            <person name="Imose N."/>
            <person name="Musashino K."/>
            <person name="Yuuki H."/>
            <person name="Oshima A."/>
            <person name="Sasaki N."/>
            <person name="Aotsuka S."/>
            <person name="Yoshikawa Y."/>
            <person name="Matsunawa H."/>
            <person name="Ichihara T."/>
            <person name="Shiohata N."/>
            <person name="Sano S."/>
            <person name="Moriya S."/>
            <person name="Momiyama H."/>
            <person name="Satoh N."/>
            <person name="Takami S."/>
            <person name="Terashima Y."/>
            <person name="Suzuki O."/>
            <person name="Nakagawa S."/>
            <person name="Senoh A."/>
            <person name="Mizoguchi H."/>
            <person name="Goto Y."/>
            <person name="Shimizu F."/>
            <person name="Wakebe H."/>
            <person name="Hishigaki H."/>
            <person name="Watanabe T."/>
            <person name="Sugiyama A."/>
            <person name="Takemoto M."/>
            <person name="Kawakami B."/>
            <person name="Yamazaki M."/>
            <person name="Watanabe K."/>
            <person name="Kumagai A."/>
            <person name="Itakura S."/>
            <person name="Fukuzumi Y."/>
            <person name="Fujimori Y."/>
            <person name="Komiyama M."/>
            <person name="Tashiro H."/>
            <person name="Tanigami A."/>
            <person name="Fujiwara T."/>
            <person name="Ono T."/>
            <person name="Yamada K."/>
            <person name="Fujii Y."/>
            <person name="Ozaki K."/>
            <person name="Hirao M."/>
            <person name="Ohmori Y."/>
            <person name="Kawabata A."/>
            <person name="Hikiji T."/>
            <person name="Kobatake N."/>
            <person name="Inagaki H."/>
            <person name="Ikema Y."/>
            <person name="Okamoto S."/>
            <person name="Okitani R."/>
            <person name="Kawakami T."/>
            <person name="Noguchi S."/>
            <person name="Itoh T."/>
            <person name="Shigeta K."/>
            <person name="Senba T."/>
            <person name="Matsumura K."/>
            <person name="Nakajima Y."/>
            <person name="Mizuno T."/>
            <person name="Morinaga M."/>
            <person name="Sasaki M."/>
            <person name="Togashi T."/>
            <person name="Oyama M."/>
            <person name="Hata H."/>
            <person name="Watanabe M."/>
            <person name="Komatsu T."/>
            <person name="Mizushima-Sugano J."/>
            <person name="Satoh T."/>
            <person name="Shirai Y."/>
            <person name="Takahashi Y."/>
            <person name="Nakagawa K."/>
            <person name="Okumura K."/>
            <person name="Nagase T."/>
            <person name="Nomura N."/>
            <person name="Kikuchi H."/>
            <person name="Masuho Y."/>
            <person name="Yamashita R."/>
            <person name="Nakai K."/>
            <person name="Yada T."/>
            <person name="Nakamura Y."/>
            <person name="Ohara O."/>
            <person name="Isogai T."/>
            <person name="Sugano S."/>
        </authorList>
    </citation>
    <scope>NUCLEOTIDE SEQUENCE [LARGE SCALE MRNA] (ISOFORMS 1 AND 2)</scope>
    <source>
        <tissue>Brain</tissue>
    </source>
</reference>
<reference key="3">
    <citation type="submission" date="2005-07" db="EMBL/GenBank/DDBJ databases">
        <authorList>
            <person name="Mural R.J."/>
            <person name="Istrail S."/>
            <person name="Sutton G.G."/>
            <person name="Florea L."/>
            <person name="Halpern A.L."/>
            <person name="Mobarry C.M."/>
            <person name="Lippert R."/>
            <person name="Walenz B."/>
            <person name="Shatkay H."/>
            <person name="Dew I."/>
            <person name="Miller J.R."/>
            <person name="Flanigan M.J."/>
            <person name="Edwards N.J."/>
            <person name="Bolanos R."/>
            <person name="Fasulo D."/>
            <person name="Halldorsson B.V."/>
            <person name="Hannenhalli S."/>
            <person name="Turner R."/>
            <person name="Yooseph S."/>
            <person name="Lu F."/>
            <person name="Nusskern D.R."/>
            <person name="Shue B.C."/>
            <person name="Zheng X.H."/>
            <person name="Zhong F."/>
            <person name="Delcher A.L."/>
            <person name="Huson D.H."/>
            <person name="Kravitz S.A."/>
            <person name="Mouchard L."/>
            <person name="Reinert K."/>
            <person name="Remington K.A."/>
            <person name="Clark A.G."/>
            <person name="Waterman M.S."/>
            <person name="Eichler E.E."/>
            <person name="Adams M.D."/>
            <person name="Hunkapiller M.W."/>
            <person name="Myers E.W."/>
            <person name="Venter J.C."/>
        </authorList>
    </citation>
    <scope>NUCLEOTIDE SEQUENCE [LARGE SCALE GENOMIC DNA]</scope>
</reference>
<reference key="4">
    <citation type="journal article" date="2004" name="Genome Res.">
        <title>The status, quality, and expansion of the NIH full-length cDNA project: the Mammalian Gene Collection (MGC).</title>
        <authorList>
            <consortium name="The MGC Project Team"/>
        </authorList>
    </citation>
    <scope>NUCLEOTIDE SEQUENCE [LARGE SCALE MRNA] (ISOFORM 1)</scope>
    <source>
        <tissue>Brain</tissue>
    </source>
</reference>
<reference key="5">
    <citation type="journal article" date="2004" name="J. Biol. Chem.">
        <title>Human Mob proteins regulate the NDR1 and NDR2 serine-threonine kinases.</title>
        <authorList>
            <person name="Devroe E."/>
            <person name="Erdjument-Bromage H."/>
            <person name="Tempst P."/>
            <person name="Silver P.A."/>
        </authorList>
    </citation>
    <scope>FUNCTION</scope>
    <scope>INTERACTION WITH STK38L</scope>
    <scope>IDENTIFICATION BY MASS SPECTROMETRY</scope>
    <scope>SUBCELLULAR LOCATION</scope>
</reference>
<reference key="6">
    <citation type="journal article" date="2008" name="Curr. Biol.">
        <title>MOBKL1A/MOBKL1B phosphorylation by MST1 and MST2 inhibits cell proliferation.</title>
        <authorList>
            <person name="Praskova M."/>
            <person name="Xia F."/>
            <person name="Avruch J."/>
        </authorList>
    </citation>
    <scope>PHOSPHORYLATION AT THR-12 AND THR-35</scope>
</reference>
<reference key="7">
    <citation type="journal article" date="2010" name="Int. J. Cancer">
        <title>Molecular characterization of human homologs of yeast MOB1.</title>
        <authorList>
            <person name="Chow A."/>
            <person name="Hao Y."/>
            <person name="Yang X."/>
        </authorList>
    </citation>
    <scope>FUNCTION</scope>
    <scope>INTERACTION WITH LATS1 AND LATS2</scope>
    <scope>TISSUE SPECIFICITY</scope>
</reference>
<reference key="8">
    <citation type="journal article" date="2012" name="Proc. Natl. Acad. Sci. U.S.A.">
        <title>N-terminal acetylome analyses and functional insights of the N-terminal acetyltransferase NatB.</title>
        <authorList>
            <person name="Van Damme P."/>
            <person name="Lasa M."/>
            <person name="Polevoda B."/>
            <person name="Gazquez C."/>
            <person name="Elosegui-Artola A."/>
            <person name="Kim D.S."/>
            <person name="De Juan-Pardo E."/>
            <person name="Demeyer K."/>
            <person name="Hole K."/>
            <person name="Larrea E."/>
            <person name="Timmerman E."/>
            <person name="Prieto J."/>
            <person name="Arnesen T."/>
            <person name="Sherman F."/>
            <person name="Gevaert K."/>
            <person name="Aldabe R."/>
        </authorList>
    </citation>
    <scope>ACETYLATION [LARGE SCALE ANALYSIS] AT SER-2</scope>
    <scope>CLEAVAGE OF INITIATOR METHIONINE [LARGE SCALE ANALYSIS]</scope>
    <scope>IDENTIFICATION BY MASS SPECTROMETRY [LARGE SCALE ANALYSIS]</scope>
</reference>